<accession>A0A2G5IC53</accession>
<dbReference type="EC" id="2.1.1.-" evidence="3"/>
<dbReference type="EC" id="1.-.-.-" evidence="3"/>
<dbReference type="EMBL" id="LKMD01000100">
    <property type="protein sequence ID" value="PIB02398.1"/>
    <property type="molecule type" value="Genomic_DNA"/>
</dbReference>
<dbReference type="RefSeq" id="XP_023460058.1">
    <property type="nucleotide sequence ID" value="XM_023593476.2"/>
</dbReference>
<dbReference type="SMR" id="A0A2G5IC53"/>
<dbReference type="GeneID" id="35424646"/>
<dbReference type="OrthoDB" id="2410195at2759"/>
<dbReference type="Proteomes" id="UP000230605">
    <property type="component" value="Chromosome 1"/>
</dbReference>
<dbReference type="GO" id="GO:0071949">
    <property type="term" value="F:FAD binding"/>
    <property type="evidence" value="ECO:0007669"/>
    <property type="project" value="InterPro"/>
</dbReference>
<dbReference type="GO" id="GO:0004497">
    <property type="term" value="F:monooxygenase activity"/>
    <property type="evidence" value="ECO:0007669"/>
    <property type="project" value="UniProtKB-KW"/>
</dbReference>
<dbReference type="GO" id="GO:0008171">
    <property type="term" value="F:O-methyltransferase activity"/>
    <property type="evidence" value="ECO:0007669"/>
    <property type="project" value="InterPro"/>
</dbReference>
<dbReference type="GO" id="GO:0032259">
    <property type="term" value="P:methylation"/>
    <property type="evidence" value="ECO:0007669"/>
    <property type="project" value="UniProtKB-KW"/>
</dbReference>
<dbReference type="GO" id="GO:0044550">
    <property type="term" value="P:secondary metabolite biosynthetic process"/>
    <property type="evidence" value="ECO:0007669"/>
    <property type="project" value="UniProtKB-ARBA"/>
</dbReference>
<dbReference type="Gene3D" id="3.50.50.60">
    <property type="entry name" value="FAD/NAD(P)-binding domain"/>
    <property type="match status" value="1"/>
</dbReference>
<dbReference type="Gene3D" id="3.40.50.150">
    <property type="entry name" value="Vaccinia Virus protein VP39"/>
    <property type="match status" value="1"/>
</dbReference>
<dbReference type="Gene3D" id="1.10.10.10">
    <property type="entry name" value="Winged helix-like DNA-binding domain superfamily/Winged helix DNA-binding domain"/>
    <property type="match status" value="1"/>
</dbReference>
<dbReference type="InterPro" id="IPR016461">
    <property type="entry name" value="COMT-like"/>
</dbReference>
<dbReference type="InterPro" id="IPR002938">
    <property type="entry name" value="FAD-bd"/>
</dbReference>
<dbReference type="InterPro" id="IPR036188">
    <property type="entry name" value="FAD/NAD-bd_sf"/>
</dbReference>
<dbReference type="InterPro" id="IPR001077">
    <property type="entry name" value="O_MeTrfase_dom"/>
</dbReference>
<dbReference type="InterPro" id="IPR029063">
    <property type="entry name" value="SAM-dependent_MTases_sf"/>
</dbReference>
<dbReference type="InterPro" id="IPR036388">
    <property type="entry name" value="WH-like_DNA-bd_sf"/>
</dbReference>
<dbReference type="InterPro" id="IPR036390">
    <property type="entry name" value="WH_DNA-bd_sf"/>
</dbReference>
<dbReference type="PANTHER" id="PTHR43712:SF19">
    <property type="entry name" value="DUAL O-METHYLTRANSFERASE_FAD-DEPENDENT MONOOXYGENASE ELCB"/>
    <property type="match status" value="1"/>
</dbReference>
<dbReference type="PANTHER" id="PTHR43712">
    <property type="entry name" value="PUTATIVE (AFU_ORTHOLOGUE AFUA_4G14580)-RELATED"/>
    <property type="match status" value="1"/>
</dbReference>
<dbReference type="Pfam" id="PF01494">
    <property type="entry name" value="FAD_binding_3"/>
    <property type="match status" value="1"/>
</dbReference>
<dbReference type="Pfam" id="PF00891">
    <property type="entry name" value="Methyltransf_2"/>
    <property type="match status" value="1"/>
</dbReference>
<dbReference type="Pfam" id="PF13450">
    <property type="entry name" value="NAD_binding_8"/>
    <property type="match status" value="1"/>
</dbReference>
<dbReference type="PRINTS" id="PR00420">
    <property type="entry name" value="RNGMNOXGNASE"/>
</dbReference>
<dbReference type="SUPFAM" id="SSF51905">
    <property type="entry name" value="FAD/NAD(P)-binding domain"/>
    <property type="match status" value="1"/>
</dbReference>
<dbReference type="SUPFAM" id="SSF53335">
    <property type="entry name" value="S-adenosyl-L-methionine-dependent methyltransferases"/>
    <property type="match status" value="1"/>
</dbReference>
<dbReference type="SUPFAM" id="SSF46785">
    <property type="entry name" value="Winged helix' DNA-binding domain"/>
    <property type="match status" value="1"/>
</dbReference>
<dbReference type="PROSITE" id="PS51683">
    <property type="entry name" value="SAM_OMT_II"/>
    <property type="match status" value="1"/>
</dbReference>
<evidence type="ECO:0000250" key="1">
    <source>
        <dbReference type="UniProtKB" id="B8M9J8"/>
    </source>
</evidence>
<evidence type="ECO:0000250" key="2">
    <source>
        <dbReference type="UniProtKB" id="Q0UHZ9"/>
    </source>
</evidence>
<evidence type="ECO:0000250" key="3">
    <source>
        <dbReference type="UniProtKB" id="Q2I0M6"/>
    </source>
</evidence>
<evidence type="ECO:0000255" key="4">
    <source>
        <dbReference type="PROSITE-ProRule" id="PRU01020"/>
    </source>
</evidence>
<evidence type="ECO:0000303" key="5">
    <source>
    </source>
</evidence>
<evidence type="ECO:0000303" key="6">
    <source>
    </source>
</evidence>
<evidence type="ECO:0000305" key="7"/>
<keyword id="KW-0274">FAD</keyword>
<keyword id="KW-0285">Flavoprotein</keyword>
<keyword id="KW-0489">Methyltransferase</keyword>
<keyword id="KW-0503">Monooxygenase</keyword>
<keyword id="KW-0511">Multifunctional enzyme</keyword>
<keyword id="KW-0520">NAD</keyword>
<keyword id="KW-0560">Oxidoreductase</keyword>
<keyword id="KW-0949">S-adenosyl-L-methionine</keyword>
<keyword id="KW-0808">Transferase</keyword>
<comment type="function">
    <text evidence="2 3 5">Dual O-methyltransferase/FAD-dependent monooxygenase; part of the gene cluster that mediates the biosynthesis of cercosporin, a light-activated, non-host-selective toxin (By similarity). The perylenequinone chromophore of cercosporin absorbs light energy to attain an electronically-activated triplet state and produces active oxygen species such as the hydroxyl radical, superoxide, hydrogen peroxide or singlet oxygen upon reaction with oxygen molecules (PubMed:11701851). These reactive oxygen species cause damage to various cellular components including lipids, proteins and nucleic acids (PubMed:11701851). The first step of cercosporin biosynthesis is performed by the polyketide synthase CTB1 which catalyzes the formation of nor-toralactone (By similarity). The starter unit acyltransferase (SAT) domain of CTB1 initiates polyketide extension by the selective utilization of acetyl-CoA, which is elongated to the heptaketide in the beta-ketoacyl synthase (KS) domain by successive condensations with six malonyl units introduced by the malonyl acyltransferase (MAT) domain. The product template (PT) domain catalyzes C4-C9 and C2-C11 aldol cyclizations and dehydrations to a trihydroxynaphthalene, which is thought to be delivered to the thioesterase (TE) domain for product release (By similarity). The bifunctional enzyme CTB3 then methylates nor-toralactone to toralactone before conducting an unusual oxidative aromatic ring opening (By similarity). The O-methyltransferase CTB2 further methylates the nascent OH-6 of the CBT3 product, blocking further oxidation at this site before the reductase CTB6 reduces the 2-oxopropyl ketone at position C7, giving naphthalene (By similarity). The FAD-dependent monooxygenase CTB5 in concert with the multicopper oxidase CTB12 are responsible for homodimerization of naphthalene with CTB7 installing the dioxepine moiety, finally producing cercosporin (By similarity). The fasciclin domain-containing protein CTB11 might act with CTB5 and CTB12 whereas the roles of CTB9 and CTB10 have still to be elucidated (By similarity).</text>
</comment>
<comment type="catalytic activity">
    <reaction evidence="3">
        <text>nor-toralactone + S-adenosyl-L-methionine = toralactone + S-adenosyl-L-homocysteine + H(+)</text>
        <dbReference type="Rhea" id="RHEA:62908"/>
        <dbReference type="ChEBI" id="CHEBI:15378"/>
        <dbReference type="ChEBI" id="CHEBI:57856"/>
        <dbReference type="ChEBI" id="CHEBI:59789"/>
        <dbReference type="ChEBI" id="CHEBI:78029"/>
        <dbReference type="ChEBI" id="CHEBI:146018"/>
    </reaction>
    <physiologicalReaction direction="left-to-right" evidence="3">
        <dbReference type="Rhea" id="RHEA:62909"/>
    </physiologicalReaction>
</comment>
<comment type="catalytic activity">
    <reaction evidence="3">
        <text>toralactone + NADH + O2 + H(+) = 1-(3,4,5-trihydroxy-7-methoxynaphthalen-2-yl)propan-2-one + CO2 + NAD(+)</text>
        <dbReference type="Rhea" id="RHEA:62912"/>
        <dbReference type="ChEBI" id="CHEBI:15378"/>
        <dbReference type="ChEBI" id="CHEBI:15379"/>
        <dbReference type="ChEBI" id="CHEBI:16526"/>
        <dbReference type="ChEBI" id="CHEBI:57540"/>
        <dbReference type="ChEBI" id="CHEBI:57945"/>
        <dbReference type="ChEBI" id="CHEBI:78029"/>
        <dbReference type="ChEBI" id="CHEBI:146020"/>
    </reaction>
    <physiologicalReaction direction="left-to-right" evidence="3">
        <dbReference type="Rhea" id="RHEA:62913"/>
    </physiologicalReaction>
</comment>
<comment type="pathway">
    <text evidence="3">Mycotoxin biosynthesis.</text>
</comment>
<comment type="similarity">
    <text evidence="7">In the C-terminal section; belongs to the paxM FAD-dependent monooxygenase family.</text>
</comment>
<comment type="similarity">
    <text evidence="7">In the N-terminal section; belongs to the class I-like SAM-binding methyltransferase superfamily. Cation-independent O-methyltransferase family. COMT subfamily.</text>
</comment>
<protein>
    <recommendedName>
        <fullName evidence="6">Dual O-methyltransferase/FAD-dependent monooxygenase CTB3</fullName>
    </recommendedName>
    <alternativeName>
        <fullName evidence="6">Cercosporin toxin biosynthesis cluster protein 3</fullName>
    </alternativeName>
    <domain>
        <recommendedName>
            <fullName evidence="3">O-methyltransferase</fullName>
            <ecNumber evidence="3">2.1.1.-</ecNumber>
        </recommendedName>
    </domain>
    <domain>
        <recommendedName>
            <fullName evidence="3">FAD-dependent monooxygenase</fullName>
            <ecNumber evidence="3">1.-.-.-</ecNumber>
        </recommendedName>
    </domain>
</protein>
<feature type="chain" id="PRO_0000449856" description="Dual O-methyltransferase/FAD-dependent monooxygenase CTB3">
    <location>
        <begin position="1"/>
        <end position="871"/>
    </location>
</feature>
<feature type="region of interest" description="O-methyltransferase" evidence="3">
    <location>
        <begin position="1"/>
        <end position="429"/>
    </location>
</feature>
<feature type="region of interest" description="FAD-dependent monooxygenase" evidence="3">
    <location>
        <begin position="430"/>
        <end position="871"/>
    </location>
</feature>
<feature type="active site" description="Proton acceptor" evidence="4">
    <location>
        <position position="331"/>
    </location>
</feature>
<feature type="binding site" evidence="4">
    <location>
        <position position="279"/>
    </location>
    <ligand>
        <name>S-adenosyl-L-methionine</name>
        <dbReference type="ChEBI" id="CHEBI:59789"/>
    </ligand>
</feature>
<feature type="binding site" evidence="1">
    <location>
        <position position="485"/>
    </location>
    <ligand>
        <name>FAD</name>
        <dbReference type="ChEBI" id="CHEBI:57692"/>
    </ligand>
</feature>
<feature type="binding site" evidence="1">
    <location>
        <position position="569"/>
    </location>
    <ligand>
        <name>FAD</name>
        <dbReference type="ChEBI" id="CHEBI:57692"/>
    </ligand>
</feature>
<feature type="binding site" evidence="1">
    <location>
        <position position="793"/>
    </location>
    <ligand>
        <name>FAD</name>
        <dbReference type="ChEBI" id="CHEBI:57692"/>
    </ligand>
</feature>
<feature type="binding site" evidence="1">
    <location>
        <position position="806"/>
    </location>
    <ligand>
        <name>FAD</name>
        <dbReference type="ChEBI" id="CHEBI:57692"/>
    </ligand>
</feature>
<name>CTB3_CERBT</name>
<reference key="1">
    <citation type="journal article" date="2018" name="Proc. Natl. Acad. Sci. U.S.A.">
        <title>Gene cluster conservation provides insight into cercosporin biosynthesis and extends production to the genus Colletotrichum.</title>
        <authorList>
            <person name="de Jonge R."/>
            <person name="Ebert M.K."/>
            <person name="Huitt-Roehl C.R."/>
            <person name="Pal P."/>
            <person name="Suttle J.C."/>
            <person name="Spanner R.E."/>
            <person name="Neubauer J.D."/>
            <person name="Jurick W.M. II"/>
            <person name="Stott K.A."/>
            <person name="Secor G.A."/>
            <person name="Thomma B.P.H.J."/>
            <person name="Van de Peer Y."/>
            <person name="Townsend C.A."/>
            <person name="Bolton M.D."/>
        </authorList>
    </citation>
    <scope>NUCLEOTIDE SEQUENCE [LARGE SCALE GENOMIC DNA]</scope>
    <scope>FUNCTION</scope>
    <scope>PATHWAY</scope>
    <source>
        <strain>09-40</strain>
    </source>
</reference>
<reference key="2">
    <citation type="journal article" date="2000" name="Annu. Rev. Phytopathol.">
        <title>The photoactivated cercospora toxin cercosporin: contributions to plant disease and fundamental biology.</title>
        <authorList>
            <person name="Daub M.E."/>
            <person name="Ehrenshaft M."/>
        </authorList>
    </citation>
    <scope>REVIEW ON CERCOSPORIN</scope>
</reference>
<proteinExistence type="inferred from homology"/>
<gene>
    <name evidence="6" type="primary">CTB3</name>
    <name type="ORF">CB0940_00834</name>
</gene>
<sequence>MMQFQRDLEASLEAVSANAQELLKSLKSRKDVQDLNASLPKDPLDNCDAQTQAARAQLAEAATRILRLSIRPQEYLEHLQNGYQHLTCFRWLVELNILDHLPHSGTISYTDLARKASVPPMQLRSICRMAICNGFLEEPEANQVRHSRISALFARDESYLGWARWMVNYSVPAAYKLSDATRSWGETVAKDQTAFNLGMDVKVPFFDHLRQTPAMKDAFAAYMRNVTSNATWGLQHAVTGFDWASLPRGAKVVDVGGSLGHGSIAIAKEHTHLTFVIQDLPETVAGARKEMAQNDKIEASVKSRITFQEHDFFGPQTVKDADVYFLRMICHDWPDNEAKVILSQIRAALKPGAQIVIMDTILPQPGTTSVLQEQQLRIRDLTMMEVFNAKERELEDWSSLMQSAGLEISRVNQPLNSVMGLLTVRSAGQTALSGTNTLTPELVTAVSASTGSADSRPVLIAGAGIAGLCLAQALKKAGIDFRVFERDSHIDARPQGYRLKFEADAAQSLKNILPDDVYEAFELSNAVTAVGETDFNPFNGNIIHSRTGGGLSGKKGLYATFTVDRKAFRTQLMTGIEDKISFGKEIAYYKTDDSASTVTAEFKDGTHVTGSFLAGTDGLHSVVRKTCVPDHRIVDTGAACIYGKTVMTPEFLARFPEKGLRFMTVVSDIAPMLQSCLIGDSPVTLLLEPIRFSEASRARYPELPADYVYWALIGPKERFGSQEVTSMKNFVSLDQAAEQAAKLSLAVTEEWHPSLRALFELQDTKQASLIRVASTIPDIPSWESHSNVTVLGDSIHPMSPCGGVGANTAIVDADALAKVLVEHGTKPPVNAIAEFEAAMRTRAKRNIWRSEVGSKRMFGQKNLVDCSEFVF</sequence>
<organism>
    <name type="scientific">Cercospora beticola</name>
    <name type="common">Sugarbeet leaf spot fungus</name>
    <dbReference type="NCBI Taxonomy" id="122368"/>
    <lineage>
        <taxon>Eukaryota</taxon>
        <taxon>Fungi</taxon>
        <taxon>Dikarya</taxon>
        <taxon>Ascomycota</taxon>
        <taxon>Pezizomycotina</taxon>
        <taxon>Dothideomycetes</taxon>
        <taxon>Dothideomycetidae</taxon>
        <taxon>Mycosphaerellales</taxon>
        <taxon>Mycosphaerellaceae</taxon>
        <taxon>Cercospora</taxon>
    </lineage>
</organism>